<dbReference type="EMBL" id="AJ567472">
    <property type="protein sequence ID" value="CAD98950.1"/>
    <property type="molecule type" value="Genomic_DNA"/>
</dbReference>
<dbReference type="RefSeq" id="YP_003746.1">
    <property type="nucleotide sequence ID" value="NC_005830.1"/>
</dbReference>
<dbReference type="SMR" id="Q70LD0"/>
<dbReference type="KEGG" id="vg:2769191"/>
<dbReference type="Proteomes" id="UP000000514">
    <property type="component" value="Genome"/>
</dbReference>
<keyword id="KW-1185">Reference proteome</keyword>
<accession>Q70LD0</accession>
<reference key="1">
    <citation type="journal article" date="2003" name="Virology">
        <title>AFV1, a novel virus infecting hyperthermophilic archaea of the genus acidianus.</title>
        <authorList>
            <person name="Bettstetter M."/>
            <person name="Peng X."/>
            <person name="Garrett R.A."/>
            <person name="Prangishvili D."/>
        </authorList>
    </citation>
    <scope>NUCLEOTIDE SEQUENCE [GENOMIC DNA]</scope>
</reference>
<name>Y195_AFV1Y</name>
<sequence>MSFRQRILEHRLEDSLEKLFSAFLSFCLEYHIPYAETISKQNHSIVAVTFDETYGLDIYQTMKERLPLDKQFYYINRKTDTYTIRGYDVAVRALEELATVISPLEILDKIHIFNISFVRSTNILYLGYTKIIKLSTVYSAVYQNKLYRLFAIYNRDITMLSRIRKYIITDYPKLFEQYFSLLPKFITDNYEVEQT</sequence>
<organismHost>
    <name type="scientific">Acidianus hospitalis</name>
    <dbReference type="NCBI Taxonomy" id="563177"/>
</organismHost>
<organismHost>
    <name type="scientific">Acidianus infernus</name>
    <dbReference type="NCBI Taxonomy" id="12915"/>
</organismHost>
<proteinExistence type="predicted"/>
<protein>
    <recommendedName>
        <fullName>Uncharacterized protein ORF195</fullName>
    </recommendedName>
</protein>
<organism>
    <name type="scientific">Acidianus filamentous virus 1 (isolate United States/Yellowstone)</name>
    <name type="common">AFV-1</name>
    <dbReference type="NCBI Taxonomy" id="654909"/>
    <lineage>
        <taxon>Viruses</taxon>
        <taxon>Adnaviria</taxon>
        <taxon>Zilligvirae</taxon>
        <taxon>Taleaviricota</taxon>
        <taxon>Tokiviricetes</taxon>
        <taxon>Ligamenvirales</taxon>
        <taxon>Ungulaviridae</taxon>
        <taxon>Captovirus</taxon>
        <taxon>Acidianus filamentous virus 1</taxon>
    </lineage>
</organism>
<gene>
    <name type="ORF">ORF195</name>
</gene>
<feature type="chain" id="PRO_0000384565" description="Uncharacterized protein ORF195">
    <location>
        <begin position="1"/>
        <end position="195"/>
    </location>
</feature>